<gene>
    <name evidence="1" type="primary">accA</name>
    <name type="ordered locus">BAbS19_I19040</name>
</gene>
<proteinExistence type="inferred from homology"/>
<name>ACCA_BRUA1</name>
<organism>
    <name type="scientific">Brucella abortus (strain S19)</name>
    <dbReference type="NCBI Taxonomy" id="430066"/>
    <lineage>
        <taxon>Bacteria</taxon>
        <taxon>Pseudomonadati</taxon>
        <taxon>Pseudomonadota</taxon>
        <taxon>Alphaproteobacteria</taxon>
        <taxon>Hyphomicrobiales</taxon>
        <taxon>Brucellaceae</taxon>
        <taxon>Brucella/Ochrobactrum group</taxon>
        <taxon>Brucella</taxon>
    </lineage>
</organism>
<reference key="1">
    <citation type="journal article" date="2008" name="PLoS ONE">
        <title>Genome sequence of Brucella abortus vaccine strain S19 compared to virulent strains yields candidate virulence genes.</title>
        <authorList>
            <person name="Crasta O.R."/>
            <person name="Folkerts O."/>
            <person name="Fei Z."/>
            <person name="Mane S.P."/>
            <person name="Evans C."/>
            <person name="Martino-Catt S."/>
            <person name="Bricker B."/>
            <person name="Yu G."/>
            <person name="Du L."/>
            <person name="Sobral B.W."/>
        </authorList>
    </citation>
    <scope>NUCLEOTIDE SEQUENCE [LARGE SCALE GENOMIC DNA]</scope>
    <source>
        <strain>S19</strain>
    </source>
</reference>
<feature type="chain" id="PRO_1000134461" description="Acetyl-coenzyme A carboxylase carboxyl transferase subunit alpha">
    <location>
        <begin position="1"/>
        <end position="317"/>
    </location>
</feature>
<feature type="domain" description="CoA carboxyltransferase C-terminal" evidence="2">
    <location>
        <begin position="40"/>
        <end position="293"/>
    </location>
</feature>
<keyword id="KW-0067">ATP-binding</keyword>
<keyword id="KW-0963">Cytoplasm</keyword>
<keyword id="KW-0275">Fatty acid biosynthesis</keyword>
<keyword id="KW-0276">Fatty acid metabolism</keyword>
<keyword id="KW-0444">Lipid biosynthesis</keyword>
<keyword id="KW-0443">Lipid metabolism</keyword>
<keyword id="KW-0547">Nucleotide-binding</keyword>
<keyword id="KW-0808">Transferase</keyword>
<dbReference type="EC" id="2.1.3.15" evidence="1"/>
<dbReference type="EMBL" id="CP000887">
    <property type="protein sequence ID" value="ACD73386.1"/>
    <property type="molecule type" value="Genomic_DNA"/>
</dbReference>
<dbReference type="RefSeq" id="WP_002967020.1">
    <property type="nucleotide sequence ID" value="NC_010742.1"/>
</dbReference>
<dbReference type="SMR" id="B2S8T2"/>
<dbReference type="KEGG" id="bmc:BAbS19_I19040"/>
<dbReference type="HOGENOM" id="CLU_015486_0_2_5"/>
<dbReference type="UniPathway" id="UPA00655">
    <property type="reaction ID" value="UER00711"/>
</dbReference>
<dbReference type="Proteomes" id="UP000002565">
    <property type="component" value="Chromosome 1"/>
</dbReference>
<dbReference type="GO" id="GO:0009317">
    <property type="term" value="C:acetyl-CoA carboxylase complex"/>
    <property type="evidence" value="ECO:0007669"/>
    <property type="project" value="InterPro"/>
</dbReference>
<dbReference type="GO" id="GO:0003989">
    <property type="term" value="F:acetyl-CoA carboxylase activity"/>
    <property type="evidence" value="ECO:0007669"/>
    <property type="project" value="InterPro"/>
</dbReference>
<dbReference type="GO" id="GO:0005524">
    <property type="term" value="F:ATP binding"/>
    <property type="evidence" value="ECO:0007669"/>
    <property type="project" value="UniProtKB-KW"/>
</dbReference>
<dbReference type="GO" id="GO:0016743">
    <property type="term" value="F:carboxyl- or carbamoyltransferase activity"/>
    <property type="evidence" value="ECO:0007669"/>
    <property type="project" value="UniProtKB-UniRule"/>
</dbReference>
<dbReference type="GO" id="GO:0006633">
    <property type="term" value="P:fatty acid biosynthetic process"/>
    <property type="evidence" value="ECO:0007669"/>
    <property type="project" value="UniProtKB-KW"/>
</dbReference>
<dbReference type="GO" id="GO:2001295">
    <property type="term" value="P:malonyl-CoA biosynthetic process"/>
    <property type="evidence" value="ECO:0007669"/>
    <property type="project" value="UniProtKB-UniRule"/>
</dbReference>
<dbReference type="Gene3D" id="3.90.226.10">
    <property type="entry name" value="2-enoyl-CoA Hydratase, Chain A, domain 1"/>
    <property type="match status" value="1"/>
</dbReference>
<dbReference type="HAMAP" id="MF_00823">
    <property type="entry name" value="AcetylCoA_CT_alpha"/>
    <property type="match status" value="1"/>
</dbReference>
<dbReference type="InterPro" id="IPR001095">
    <property type="entry name" value="Acetyl_CoA_COase_a_su"/>
</dbReference>
<dbReference type="InterPro" id="IPR029045">
    <property type="entry name" value="ClpP/crotonase-like_dom_sf"/>
</dbReference>
<dbReference type="InterPro" id="IPR011763">
    <property type="entry name" value="COA_CT_C"/>
</dbReference>
<dbReference type="NCBIfam" id="TIGR00513">
    <property type="entry name" value="accA"/>
    <property type="match status" value="1"/>
</dbReference>
<dbReference type="NCBIfam" id="NF041504">
    <property type="entry name" value="AccA_sub"/>
    <property type="match status" value="1"/>
</dbReference>
<dbReference type="NCBIfam" id="NF004344">
    <property type="entry name" value="PRK05724.1"/>
    <property type="match status" value="1"/>
</dbReference>
<dbReference type="PANTHER" id="PTHR42853">
    <property type="entry name" value="ACETYL-COENZYME A CARBOXYLASE CARBOXYL TRANSFERASE SUBUNIT ALPHA"/>
    <property type="match status" value="1"/>
</dbReference>
<dbReference type="PANTHER" id="PTHR42853:SF3">
    <property type="entry name" value="ACETYL-COENZYME A CARBOXYLASE CARBOXYL TRANSFERASE SUBUNIT ALPHA, CHLOROPLASTIC"/>
    <property type="match status" value="1"/>
</dbReference>
<dbReference type="Pfam" id="PF03255">
    <property type="entry name" value="ACCA"/>
    <property type="match status" value="1"/>
</dbReference>
<dbReference type="PRINTS" id="PR01069">
    <property type="entry name" value="ACCCTRFRASEA"/>
</dbReference>
<dbReference type="SUPFAM" id="SSF52096">
    <property type="entry name" value="ClpP/crotonase"/>
    <property type="match status" value="1"/>
</dbReference>
<dbReference type="PROSITE" id="PS50989">
    <property type="entry name" value="COA_CT_CTER"/>
    <property type="match status" value="1"/>
</dbReference>
<accession>B2S8T2</accession>
<evidence type="ECO:0000255" key="1">
    <source>
        <dbReference type="HAMAP-Rule" id="MF_00823"/>
    </source>
</evidence>
<evidence type="ECO:0000255" key="2">
    <source>
        <dbReference type="PROSITE-ProRule" id="PRU01137"/>
    </source>
</evidence>
<comment type="function">
    <text evidence="1">Component of the acetyl coenzyme A carboxylase (ACC) complex. First, biotin carboxylase catalyzes the carboxylation of biotin on its carrier protein (BCCP) and then the CO(2) group is transferred by the carboxyltransferase to acetyl-CoA to form malonyl-CoA.</text>
</comment>
<comment type="catalytic activity">
    <reaction evidence="1">
        <text>N(6)-carboxybiotinyl-L-lysyl-[protein] + acetyl-CoA = N(6)-biotinyl-L-lysyl-[protein] + malonyl-CoA</text>
        <dbReference type="Rhea" id="RHEA:54728"/>
        <dbReference type="Rhea" id="RHEA-COMP:10505"/>
        <dbReference type="Rhea" id="RHEA-COMP:10506"/>
        <dbReference type="ChEBI" id="CHEBI:57288"/>
        <dbReference type="ChEBI" id="CHEBI:57384"/>
        <dbReference type="ChEBI" id="CHEBI:83144"/>
        <dbReference type="ChEBI" id="CHEBI:83145"/>
        <dbReference type="EC" id="2.1.3.15"/>
    </reaction>
</comment>
<comment type="pathway">
    <text evidence="1">Lipid metabolism; malonyl-CoA biosynthesis; malonyl-CoA from acetyl-CoA: step 1/1.</text>
</comment>
<comment type="subunit">
    <text evidence="1">Acetyl-CoA carboxylase is a heterohexamer composed of biotin carboxyl carrier protein (AccB), biotin carboxylase (AccC) and two subunits each of ACCase subunit alpha (AccA) and ACCase subunit beta (AccD).</text>
</comment>
<comment type="subcellular location">
    <subcellularLocation>
        <location evidence="1">Cytoplasm</location>
    </subcellularLocation>
</comment>
<comment type="similarity">
    <text evidence="1">Belongs to the AccA family.</text>
</comment>
<sequence>MYNYLDFEKPVADLEGQILELKKLAQEQGSVEMGDEISRLEKRSADALKDIYRKLTPWQKAQIARHPDRPHCLEYIDRLFTEFTPLAGDRKFANDEALQAGFGRFNGTPVAIIGQEKGSDTKTRLKHNFGSARPEGYRKAVRIMEMADRFQLPLITFVDTAGAYPGVSAEERGQAEAIARSTAECLKLRVPVISIIIGEGGSGGAIAIAVANRVYMLEHSIYSVISPEGAASILWHDSTRAKDAASNMRITAQDLFDLKIIDGIIPEPLGGAHRGKESVIDAAGDIIAASLRSMKDIDGETLKQERRQKFLEIGRNI</sequence>
<protein>
    <recommendedName>
        <fullName evidence="1">Acetyl-coenzyme A carboxylase carboxyl transferase subunit alpha</fullName>
        <shortName evidence="1">ACCase subunit alpha</shortName>
        <shortName evidence="1">Acetyl-CoA carboxylase carboxyltransferase subunit alpha</shortName>
        <ecNumber evidence="1">2.1.3.15</ecNumber>
    </recommendedName>
</protein>